<sequence length="261" mass="28240">MSNALIRLEQVGVTFAGQNVLENIQLSVEPGQIVTLIGPNGAGKTTLVRAVLGLLKPDTGSVWRKPKLRVGYMPQKLHVDPTLPLSVLRFLRLVPGVDRTRALAALKEVGAEQVIDSPVQSISGGEMQRVLLARALLREPELLVLDEPVQGVDVAGQAELYSLITRLRDRHGCGVLMVSHDLHLVMSTTDQVVCLNRHVCCSGHPEQVSGDPAFVELFGKNAPSLAIYHHHHDHAHDLHGSVVTQPASGHAHVHGENCKHG</sequence>
<keyword id="KW-0067">ATP-binding</keyword>
<keyword id="KW-0997">Cell inner membrane</keyword>
<keyword id="KW-1003">Cell membrane</keyword>
<keyword id="KW-0406">Ion transport</keyword>
<keyword id="KW-0472">Membrane</keyword>
<keyword id="KW-0547">Nucleotide-binding</keyword>
<keyword id="KW-1278">Translocase</keyword>
<keyword id="KW-0813">Transport</keyword>
<keyword id="KW-0862">Zinc</keyword>
<keyword id="KW-0864">Zinc transport</keyword>
<dbReference type="EC" id="7.2.2.20" evidence="1"/>
<dbReference type="EMBL" id="CP000076">
    <property type="protein sequence ID" value="AAY95494.1"/>
    <property type="molecule type" value="Genomic_DNA"/>
</dbReference>
<dbReference type="RefSeq" id="WP_011058465.1">
    <property type="nucleotide sequence ID" value="NC_004129.6"/>
</dbReference>
<dbReference type="SMR" id="Q4KKK4"/>
<dbReference type="STRING" id="220664.PFL_0077"/>
<dbReference type="GeneID" id="57473050"/>
<dbReference type="KEGG" id="pfl:PFL_0077"/>
<dbReference type="PATRIC" id="fig|220664.5.peg.80"/>
<dbReference type="eggNOG" id="COG1121">
    <property type="taxonomic scope" value="Bacteria"/>
</dbReference>
<dbReference type="HOGENOM" id="CLU_000604_1_11_6"/>
<dbReference type="Proteomes" id="UP000008540">
    <property type="component" value="Chromosome"/>
</dbReference>
<dbReference type="GO" id="GO:0005886">
    <property type="term" value="C:plasma membrane"/>
    <property type="evidence" value="ECO:0007669"/>
    <property type="project" value="UniProtKB-SubCell"/>
</dbReference>
<dbReference type="GO" id="GO:0015633">
    <property type="term" value="F:ABC-type zinc transporter activity"/>
    <property type="evidence" value="ECO:0007669"/>
    <property type="project" value="UniProtKB-EC"/>
</dbReference>
<dbReference type="GO" id="GO:0005524">
    <property type="term" value="F:ATP binding"/>
    <property type="evidence" value="ECO:0007669"/>
    <property type="project" value="UniProtKB-KW"/>
</dbReference>
<dbReference type="GO" id="GO:0016887">
    <property type="term" value="F:ATP hydrolysis activity"/>
    <property type="evidence" value="ECO:0007669"/>
    <property type="project" value="InterPro"/>
</dbReference>
<dbReference type="GO" id="GO:0010043">
    <property type="term" value="P:response to zinc ion"/>
    <property type="evidence" value="ECO:0007669"/>
    <property type="project" value="TreeGrafter"/>
</dbReference>
<dbReference type="CDD" id="cd03235">
    <property type="entry name" value="ABC_Metallic_Cations"/>
    <property type="match status" value="1"/>
</dbReference>
<dbReference type="FunFam" id="3.40.50.300:FF:000392">
    <property type="entry name" value="Zinc import ATP-binding protein ZnuC"/>
    <property type="match status" value="1"/>
</dbReference>
<dbReference type="Gene3D" id="3.40.50.300">
    <property type="entry name" value="P-loop containing nucleotide triphosphate hydrolases"/>
    <property type="match status" value="1"/>
</dbReference>
<dbReference type="InterPro" id="IPR003593">
    <property type="entry name" value="AAA+_ATPase"/>
</dbReference>
<dbReference type="InterPro" id="IPR003439">
    <property type="entry name" value="ABC_transporter-like_ATP-bd"/>
</dbReference>
<dbReference type="InterPro" id="IPR017871">
    <property type="entry name" value="ABC_transporter-like_CS"/>
</dbReference>
<dbReference type="InterPro" id="IPR050153">
    <property type="entry name" value="Metal_Ion_Import_ABC"/>
</dbReference>
<dbReference type="InterPro" id="IPR027417">
    <property type="entry name" value="P-loop_NTPase"/>
</dbReference>
<dbReference type="NCBIfam" id="NF007090">
    <property type="entry name" value="PRK09544.1"/>
    <property type="match status" value="1"/>
</dbReference>
<dbReference type="PANTHER" id="PTHR42734">
    <property type="entry name" value="METAL TRANSPORT SYSTEM ATP-BINDING PROTEIN TM_0124-RELATED"/>
    <property type="match status" value="1"/>
</dbReference>
<dbReference type="PANTHER" id="PTHR42734:SF9">
    <property type="entry name" value="ZINC IMPORT ATP-BINDING PROTEIN ZNUC"/>
    <property type="match status" value="1"/>
</dbReference>
<dbReference type="Pfam" id="PF00005">
    <property type="entry name" value="ABC_tran"/>
    <property type="match status" value="1"/>
</dbReference>
<dbReference type="SMART" id="SM00382">
    <property type="entry name" value="AAA"/>
    <property type="match status" value="1"/>
</dbReference>
<dbReference type="SUPFAM" id="SSF52540">
    <property type="entry name" value="P-loop containing nucleoside triphosphate hydrolases"/>
    <property type="match status" value="1"/>
</dbReference>
<dbReference type="PROSITE" id="PS00211">
    <property type="entry name" value="ABC_TRANSPORTER_1"/>
    <property type="match status" value="1"/>
</dbReference>
<dbReference type="PROSITE" id="PS50893">
    <property type="entry name" value="ABC_TRANSPORTER_2"/>
    <property type="match status" value="1"/>
</dbReference>
<dbReference type="PROSITE" id="PS51298">
    <property type="entry name" value="ZNUC"/>
    <property type="match status" value="1"/>
</dbReference>
<protein>
    <recommendedName>
        <fullName evidence="1">Zinc import ATP-binding protein ZnuC</fullName>
        <ecNumber evidence="1">7.2.2.20</ecNumber>
    </recommendedName>
</protein>
<accession>Q4KKK4</accession>
<name>ZNUC_PSEF5</name>
<comment type="function">
    <text evidence="1">Part of the ABC transporter complex ZnuABC involved in zinc import. Responsible for energy coupling to the transport system.</text>
</comment>
<comment type="catalytic activity">
    <reaction evidence="1">
        <text>Zn(2+)(out) + ATP(in) + H2O(in) = Zn(2+)(in) + ADP(in) + phosphate(in) + H(+)(in)</text>
        <dbReference type="Rhea" id="RHEA:29795"/>
        <dbReference type="ChEBI" id="CHEBI:15377"/>
        <dbReference type="ChEBI" id="CHEBI:15378"/>
        <dbReference type="ChEBI" id="CHEBI:29105"/>
        <dbReference type="ChEBI" id="CHEBI:30616"/>
        <dbReference type="ChEBI" id="CHEBI:43474"/>
        <dbReference type="ChEBI" id="CHEBI:456216"/>
        <dbReference type="EC" id="7.2.2.20"/>
    </reaction>
</comment>
<comment type="subunit">
    <text evidence="1">The complex is composed of two ATP-binding proteins (ZnuC), two transmembrane proteins (ZnuB) and a solute-binding protein (ZnuA).</text>
</comment>
<comment type="subcellular location">
    <subcellularLocation>
        <location evidence="1">Cell inner membrane</location>
        <topology evidence="1">Peripheral membrane protein</topology>
    </subcellularLocation>
</comment>
<comment type="similarity">
    <text evidence="1">Belongs to the ABC transporter superfamily. Zinc importer (TC 3.A.1.15.5) family.</text>
</comment>
<evidence type="ECO:0000255" key="1">
    <source>
        <dbReference type="HAMAP-Rule" id="MF_01725"/>
    </source>
</evidence>
<gene>
    <name evidence="1" type="primary">znuC</name>
    <name type="ordered locus">PFL_0077</name>
</gene>
<reference key="1">
    <citation type="journal article" date="2005" name="Nat. Biotechnol.">
        <title>Complete genome sequence of the plant commensal Pseudomonas fluorescens Pf-5.</title>
        <authorList>
            <person name="Paulsen I.T."/>
            <person name="Press C.M."/>
            <person name="Ravel J."/>
            <person name="Kobayashi D.Y."/>
            <person name="Myers G.S.A."/>
            <person name="Mavrodi D.V."/>
            <person name="DeBoy R.T."/>
            <person name="Seshadri R."/>
            <person name="Ren Q."/>
            <person name="Madupu R."/>
            <person name="Dodson R.J."/>
            <person name="Durkin A.S."/>
            <person name="Brinkac L.M."/>
            <person name="Daugherty S.C."/>
            <person name="Sullivan S.A."/>
            <person name="Rosovitz M.J."/>
            <person name="Gwinn M.L."/>
            <person name="Zhou L."/>
            <person name="Schneider D.J."/>
            <person name="Cartinhour S.W."/>
            <person name="Nelson W.C."/>
            <person name="Weidman J."/>
            <person name="Watkins K."/>
            <person name="Tran K."/>
            <person name="Khouri H."/>
            <person name="Pierson E.A."/>
            <person name="Pierson L.S. III"/>
            <person name="Thomashow L.S."/>
            <person name="Loper J.E."/>
        </authorList>
    </citation>
    <scope>NUCLEOTIDE SEQUENCE [LARGE SCALE GENOMIC DNA]</scope>
    <source>
        <strain>ATCC BAA-477 / NRRL B-23932 / Pf-5</strain>
    </source>
</reference>
<organism>
    <name type="scientific">Pseudomonas fluorescens (strain ATCC BAA-477 / NRRL B-23932 / Pf-5)</name>
    <dbReference type="NCBI Taxonomy" id="220664"/>
    <lineage>
        <taxon>Bacteria</taxon>
        <taxon>Pseudomonadati</taxon>
        <taxon>Pseudomonadota</taxon>
        <taxon>Gammaproteobacteria</taxon>
        <taxon>Pseudomonadales</taxon>
        <taxon>Pseudomonadaceae</taxon>
        <taxon>Pseudomonas</taxon>
    </lineage>
</organism>
<proteinExistence type="inferred from homology"/>
<feature type="chain" id="PRO_0000281527" description="Zinc import ATP-binding protein ZnuC">
    <location>
        <begin position="1"/>
        <end position="261"/>
    </location>
</feature>
<feature type="domain" description="ABC transporter" evidence="1">
    <location>
        <begin position="6"/>
        <end position="221"/>
    </location>
</feature>
<feature type="binding site" evidence="1">
    <location>
        <begin position="38"/>
        <end position="45"/>
    </location>
    <ligand>
        <name>ATP</name>
        <dbReference type="ChEBI" id="CHEBI:30616"/>
    </ligand>
</feature>